<comment type="function">
    <text evidence="1">Essential cell division protein. May link together the upstream cell division proteins, which are predominantly cytoplasmic, with the downstream cell division proteins, which are predominantly periplasmic.</text>
</comment>
<comment type="subunit">
    <text evidence="1">Part of a complex composed of FtsB, FtsL and FtsQ.</text>
</comment>
<comment type="subcellular location">
    <subcellularLocation>
        <location evidence="1">Cell inner membrane</location>
        <topology evidence="1">Single-pass type II membrane protein</topology>
    </subcellularLocation>
    <text evidence="1">Localizes to the division septum.</text>
</comment>
<comment type="similarity">
    <text evidence="1">Belongs to the FtsB family.</text>
</comment>
<reference key="1">
    <citation type="journal article" date="2006" name="Proc. Natl. Acad. Sci. U.S.A.">
        <title>Identification of genes subject to positive selection in uropathogenic strains of Escherichia coli: a comparative genomics approach.</title>
        <authorList>
            <person name="Chen S.L."/>
            <person name="Hung C.-S."/>
            <person name="Xu J."/>
            <person name="Reigstad C.S."/>
            <person name="Magrini V."/>
            <person name="Sabo A."/>
            <person name="Blasiar D."/>
            <person name="Bieri T."/>
            <person name="Meyer R.R."/>
            <person name="Ozersky P."/>
            <person name="Armstrong J.R."/>
            <person name="Fulton R.S."/>
            <person name="Latreille J.P."/>
            <person name="Spieth J."/>
            <person name="Hooton T.M."/>
            <person name="Mardis E.R."/>
            <person name="Hultgren S.J."/>
            <person name="Gordon J.I."/>
        </authorList>
    </citation>
    <scope>NUCLEOTIDE SEQUENCE [LARGE SCALE GENOMIC DNA]</scope>
    <source>
        <strain>UTI89 / UPEC</strain>
    </source>
</reference>
<evidence type="ECO:0000255" key="1">
    <source>
        <dbReference type="HAMAP-Rule" id="MF_00599"/>
    </source>
</evidence>
<accession>Q1R7U3</accession>
<dbReference type="EMBL" id="CP000243">
    <property type="protein sequence ID" value="ABE08571.1"/>
    <property type="molecule type" value="Genomic_DNA"/>
</dbReference>
<dbReference type="RefSeq" id="WP_000517479.1">
    <property type="nucleotide sequence ID" value="NZ_CP064825.1"/>
</dbReference>
<dbReference type="SMR" id="Q1R7U3"/>
<dbReference type="GeneID" id="89517564"/>
<dbReference type="KEGG" id="eci:UTI89_C3119"/>
<dbReference type="HOGENOM" id="CLU_134863_5_2_6"/>
<dbReference type="Proteomes" id="UP000001952">
    <property type="component" value="Chromosome"/>
</dbReference>
<dbReference type="GO" id="GO:0032153">
    <property type="term" value="C:cell division site"/>
    <property type="evidence" value="ECO:0007669"/>
    <property type="project" value="UniProtKB-UniRule"/>
</dbReference>
<dbReference type="GO" id="GO:0030428">
    <property type="term" value="C:cell septum"/>
    <property type="evidence" value="ECO:0007669"/>
    <property type="project" value="TreeGrafter"/>
</dbReference>
<dbReference type="GO" id="GO:0005886">
    <property type="term" value="C:plasma membrane"/>
    <property type="evidence" value="ECO:0007669"/>
    <property type="project" value="UniProtKB-SubCell"/>
</dbReference>
<dbReference type="GO" id="GO:0043093">
    <property type="term" value="P:FtsZ-dependent cytokinesis"/>
    <property type="evidence" value="ECO:0007669"/>
    <property type="project" value="UniProtKB-UniRule"/>
</dbReference>
<dbReference type="FunFam" id="1.20.5.400:FF:000001">
    <property type="entry name" value="Cell division protein FtsB"/>
    <property type="match status" value="1"/>
</dbReference>
<dbReference type="Gene3D" id="1.20.5.400">
    <property type="match status" value="1"/>
</dbReference>
<dbReference type="HAMAP" id="MF_00599">
    <property type="entry name" value="FtsB"/>
    <property type="match status" value="1"/>
</dbReference>
<dbReference type="InterPro" id="IPR023081">
    <property type="entry name" value="Cell_div_FtsB"/>
</dbReference>
<dbReference type="InterPro" id="IPR007060">
    <property type="entry name" value="FtsL/DivIC"/>
</dbReference>
<dbReference type="NCBIfam" id="NF002058">
    <property type="entry name" value="PRK00888.1"/>
    <property type="match status" value="1"/>
</dbReference>
<dbReference type="PANTHER" id="PTHR37485">
    <property type="entry name" value="CELL DIVISION PROTEIN FTSB"/>
    <property type="match status" value="1"/>
</dbReference>
<dbReference type="PANTHER" id="PTHR37485:SF1">
    <property type="entry name" value="CELL DIVISION PROTEIN FTSB"/>
    <property type="match status" value="1"/>
</dbReference>
<dbReference type="Pfam" id="PF04977">
    <property type="entry name" value="DivIC"/>
    <property type="match status" value="1"/>
</dbReference>
<proteinExistence type="inferred from homology"/>
<feature type="chain" id="PRO_1000025698" description="Cell division protein FtsB">
    <location>
        <begin position="1"/>
        <end position="103"/>
    </location>
</feature>
<feature type="topological domain" description="Cytoplasmic" evidence="1">
    <location>
        <begin position="1"/>
        <end position="3"/>
    </location>
</feature>
<feature type="transmembrane region" description="Helical" evidence="1">
    <location>
        <begin position="4"/>
        <end position="21"/>
    </location>
</feature>
<feature type="topological domain" description="Periplasmic" evidence="1">
    <location>
        <begin position="22"/>
        <end position="103"/>
    </location>
</feature>
<feature type="coiled-coil region" evidence="1">
    <location>
        <begin position="31"/>
        <end position="71"/>
    </location>
</feature>
<protein>
    <recommendedName>
        <fullName evidence="1">Cell division protein FtsB</fullName>
    </recommendedName>
</protein>
<sequence>MGKLTLLLLAILVWLQYSLWFGKNGIHDYTRVNNDVAAQQATNAKLKARNDQLFAEIDDLNGGQEALEERARNELSMTRPGETFYRLVPDASKRAQSAGQNNR</sequence>
<keyword id="KW-0131">Cell cycle</keyword>
<keyword id="KW-0132">Cell division</keyword>
<keyword id="KW-0997">Cell inner membrane</keyword>
<keyword id="KW-1003">Cell membrane</keyword>
<keyword id="KW-0175">Coiled coil</keyword>
<keyword id="KW-0472">Membrane</keyword>
<keyword id="KW-0812">Transmembrane</keyword>
<keyword id="KW-1133">Transmembrane helix</keyword>
<organism>
    <name type="scientific">Escherichia coli (strain UTI89 / UPEC)</name>
    <dbReference type="NCBI Taxonomy" id="364106"/>
    <lineage>
        <taxon>Bacteria</taxon>
        <taxon>Pseudomonadati</taxon>
        <taxon>Pseudomonadota</taxon>
        <taxon>Gammaproteobacteria</taxon>
        <taxon>Enterobacterales</taxon>
        <taxon>Enterobacteriaceae</taxon>
        <taxon>Escherichia</taxon>
    </lineage>
</organism>
<name>FTSB_ECOUT</name>
<gene>
    <name evidence="1" type="primary">ftsB</name>
    <name type="ordered locus">UTI89_C3119</name>
</gene>